<keyword id="KW-0025">Alternative splicing</keyword>
<keyword id="KW-1015">Disulfide bond</keyword>
<keyword id="KW-0245">EGF-like domain</keyword>
<keyword id="KW-0325">Glycoprotein</keyword>
<keyword id="KW-1267">Proteomics identification</keyword>
<keyword id="KW-1185">Reference proteome</keyword>
<keyword id="KW-0677">Repeat</keyword>
<keyword id="KW-0964">Secreted</keyword>
<keyword id="KW-0721">Serine protease homolog</keyword>
<keyword id="KW-0732">Signal</keyword>
<keyword id="KW-0768">Sushi</keyword>
<name>PAMR1_HUMAN</name>
<accession>Q6UXH9</accession>
<accession>A8MQ58</accession>
<accession>B7ZA73</accession>
<accession>Q5EBL7</accession>
<accession>Q5JPI4</accession>
<accession>Q6N062</accession>
<accession>Q71RE9</accession>
<accession>Q96JW2</accession>
<accession>Q9Y432</accession>
<proteinExistence type="evidence at protein level"/>
<organism>
    <name type="scientific">Homo sapiens</name>
    <name type="common">Human</name>
    <dbReference type="NCBI Taxonomy" id="9606"/>
    <lineage>
        <taxon>Eukaryota</taxon>
        <taxon>Metazoa</taxon>
        <taxon>Chordata</taxon>
        <taxon>Craniata</taxon>
        <taxon>Vertebrata</taxon>
        <taxon>Euteleostomi</taxon>
        <taxon>Mammalia</taxon>
        <taxon>Eutheria</taxon>
        <taxon>Euarchontoglires</taxon>
        <taxon>Primates</taxon>
        <taxon>Haplorrhini</taxon>
        <taxon>Catarrhini</taxon>
        <taxon>Hominidae</taxon>
        <taxon>Homo</taxon>
    </lineage>
</organism>
<reference key="1">
    <citation type="journal article" date="2003" name="Genome Res.">
        <title>The secreted protein discovery initiative (SPDI), a large-scale effort to identify novel human secreted and transmembrane proteins: a bioinformatics assessment.</title>
        <authorList>
            <person name="Clark H.F."/>
            <person name="Gurney A.L."/>
            <person name="Abaya E."/>
            <person name="Baker K."/>
            <person name="Baldwin D.T."/>
            <person name="Brush J."/>
            <person name="Chen J."/>
            <person name="Chow B."/>
            <person name="Chui C."/>
            <person name="Crowley C."/>
            <person name="Currell B."/>
            <person name="Deuel B."/>
            <person name="Dowd P."/>
            <person name="Eaton D."/>
            <person name="Foster J.S."/>
            <person name="Grimaldi C."/>
            <person name="Gu Q."/>
            <person name="Hass P.E."/>
            <person name="Heldens S."/>
            <person name="Huang A."/>
            <person name="Kim H.S."/>
            <person name="Klimowski L."/>
            <person name="Jin Y."/>
            <person name="Johnson S."/>
            <person name="Lee J."/>
            <person name="Lewis L."/>
            <person name="Liao D."/>
            <person name="Mark M.R."/>
            <person name="Robbie E."/>
            <person name="Sanchez C."/>
            <person name="Schoenfeld J."/>
            <person name="Seshagiri S."/>
            <person name="Simmons L."/>
            <person name="Singh J."/>
            <person name="Smith V."/>
            <person name="Stinson J."/>
            <person name="Vagts A."/>
            <person name="Vandlen R.L."/>
            <person name="Watanabe C."/>
            <person name="Wieand D."/>
            <person name="Woods K."/>
            <person name="Xie M.-H."/>
            <person name="Yansura D.G."/>
            <person name="Yi S."/>
            <person name="Yu G."/>
            <person name="Yuan J."/>
            <person name="Zhang M."/>
            <person name="Zhang Z."/>
            <person name="Goddard A.D."/>
            <person name="Wood W.I."/>
            <person name="Godowski P.J."/>
            <person name="Gray A.M."/>
        </authorList>
    </citation>
    <scope>NUCLEOTIDE SEQUENCE [LARGE SCALE MRNA]</scope>
</reference>
<reference key="2">
    <citation type="journal article" date="2004" name="Nat. Genet.">
        <title>Complete sequencing and characterization of 21,243 full-length human cDNAs.</title>
        <authorList>
            <person name="Ota T."/>
            <person name="Suzuki Y."/>
            <person name="Nishikawa T."/>
            <person name="Otsuki T."/>
            <person name="Sugiyama T."/>
            <person name="Irie R."/>
            <person name="Wakamatsu A."/>
            <person name="Hayashi K."/>
            <person name="Sato H."/>
            <person name="Nagai K."/>
            <person name="Kimura K."/>
            <person name="Makita H."/>
            <person name="Sekine M."/>
            <person name="Obayashi M."/>
            <person name="Nishi T."/>
            <person name="Shibahara T."/>
            <person name="Tanaka T."/>
            <person name="Ishii S."/>
            <person name="Yamamoto J."/>
            <person name="Saito K."/>
            <person name="Kawai Y."/>
            <person name="Isono Y."/>
            <person name="Nakamura Y."/>
            <person name="Nagahari K."/>
            <person name="Murakami K."/>
            <person name="Yasuda T."/>
            <person name="Iwayanagi T."/>
            <person name="Wagatsuma M."/>
            <person name="Shiratori A."/>
            <person name="Sudo H."/>
            <person name="Hosoiri T."/>
            <person name="Kaku Y."/>
            <person name="Kodaira H."/>
            <person name="Kondo H."/>
            <person name="Sugawara M."/>
            <person name="Takahashi M."/>
            <person name="Kanda K."/>
            <person name="Yokoi T."/>
            <person name="Furuya T."/>
            <person name="Kikkawa E."/>
            <person name="Omura Y."/>
            <person name="Abe K."/>
            <person name="Kamihara K."/>
            <person name="Katsuta N."/>
            <person name="Sato K."/>
            <person name="Tanikawa M."/>
            <person name="Yamazaki M."/>
            <person name="Ninomiya K."/>
            <person name="Ishibashi T."/>
            <person name="Yamashita H."/>
            <person name="Murakawa K."/>
            <person name="Fujimori K."/>
            <person name="Tanai H."/>
            <person name="Kimata M."/>
            <person name="Watanabe M."/>
            <person name="Hiraoka S."/>
            <person name="Chiba Y."/>
            <person name="Ishida S."/>
            <person name="Ono Y."/>
            <person name="Takiguchi S."/>
            <person name="Watanabe S."/>
            <person name="Yosida M."/>
            <person name="Hotuta T."/>
            <person name="Kusano J."/>
            <person name="Kanehori K."/>
            <person name="Takahashi-Fujii A."/>
            <person name="Hara H."/>
            <person name="Tanase T.-O."/>
            <person name="Nomura Y."/>
            <person name="Togiya S."/>
            <person name="Komai F."/>
            <person name="Hara R."/>
            <person name="Takeuchi K."/>
            <person name="Arita M."/>
            <person name="Imose N."/>
            <person name="Musashino K."/>
            <person name="Yuuki H."/>
            <person name="Oshima A."/>
            <person name="Sasaki N."/>
            <person name="Aotsuka S."/>
            <person name="Yoshikawa Y."/>
            <person name="Matsunawa H."/>
            <person name="Ichihara T."/>
            <person name="Shiohata N."/>
            <person name="Sano S."/>
            <person name="Moriya S."/>
            <person name="Momiyama H."/>
            <person name="Satoh N."/>
            <person name="Takami S."/>
            <person name="Terashima Y."/>
            <person name="Suzuki O."/>
            <person name="Nakagawa S."/>
            <person name="Senoh A."/>
            <person name="Mizoguchi H."/>
            <person name="Goto Y."/>
            <person name="Shimizu F."/>
            <person name="Wakebe H."/>
            <person name="Hishigaki H."/>
            <person name="Watanabe T."/>
            <person name="Sugiyama A."/>
            <person name="Takemoto M."/>
            <person name="Kawakami B."/>
            <person name="Yamazaki M."/>
            <person name="Watanabe K."/>
            <person name="Kumagai A."/>
            <person name="Itakura S."/>
            <person name="Fukuzumi Y."/>
            <person name="Fujimori Y."/>
            <person name="Komiyama M."/>
            <person name="Tashiro H."/>
            <person name="Tanigami A."/>
            <person name="Fujiwara T."/>
            <person name="Ono T."/>
            <person name="Yamada K."/>
            <person name="Fujii Y."/>
            <person name="Ozaki K."/>
            <person name="Hirao M."/>
            <person name="Ohmori Y."/>
            <person name="Kawabata A."/>
            <person name="Hikiji T."/>
            <person name="Kobatake N."/>
            <person name="Inagaki H."/>
            <person name="Ikema Y."/>
            <person name="Okamoto S."/>
            <person name="Okitani R."/>
            <person name="Kawakami T."/>
            <person name="Noguchi S."/>
            <person name="Itoh T."/>
            <person name="Shigeta K."/>
            <person name="Senba T."/>
            <person name="Matsumura K."/>
            <person name="Nakajima Y."/>
            <person name="Mizuno T."/>
            <person name="Morinaga M."/>
            <person name="Sasaki M."/>
            <person name="Togashi T."/>
            <person name="Oyama M."/>
            <person name="Hata H."/>
            <person name="Watanabe M."/>
            <person name="Komatsu T."/>
            <person name="Mizushima-Sugano J."/>
            <person name="Satoh T."/>
            <person name="Shirai Y."/>
            <person name="Takahashi Y."/>
            <person name="Nakagawa K."/>
            <person name="Okumura K."/>
            <person name="Nagase T."/>
            <person name="Nomura N."/>
            <person name="Kikuchi H."/>
            <person name="Masuho Y."/>
            <person name="Yamashita R."/>
            <person name="Nakai K."/>
            <person name="Yada T."/>
            <person name="Nakamura Y."/>
            <person name="Ohara O."/>
            <person name="Isogai T."/>
            <person name="Sugano S."/>
        </authorList>
    </citation>
    <scope>NUCLEOTIDE SEQUENCE [LARGE SCALE MRNA] (ISOFORMS 2 AND 3)</scope>
    <source>
        <tissue>Placenta</tissue>
    </source>
</reference>
<reference key="3">
    <citation type="journal article" date="2007" name="BMC Genomics">
        <title>The full-ORF clone resource of the German cDNA consortium.</title>
        <authorList>
            <person name="Bechtel S."/>
            <person name="Rosenfelder H."/>
            <person name="Duda A."/>
            <person name="Schmidt C.P."/>
            <person name="Ernst U."/>
            <person name="Wellenreuther R."/>
            <person name="Mehrle A."/>
            <person name="Schuster C."/>
            <person name="Bahr A."/>
            <person name="Bloecker H."/>
            <person name="Heubner D."/>
            <person name="Hoerlein A."/>
            <person name="Michel G."/>
            <person name="Wedler H."/>
            <person name="Koehrer K."/>
            <person name="Ottenwaelder B."/>
            <person name="Poustka A."/>
            <person name="Wiemann S."/>
            <person name="Schupp I."/>
        </authorList>
    </citation>
    <scope>NUCLEOTIDE SEQUENCE [LARGE SCALE MRNA]</scope>
    <source>
        <tissue>Colon endothelium</tissue>
        <tissue>Lymph node</tissue>
    </source>
</reference>
<reference key="4">
    <citation type="journal article" date="2006" name="Nature">
        <title>Human chromosome 11 DNA sequence and analysis including novel gene identification.</title>
        <authorList>
            <person name="Taylor T.D."/>
            <person name="Noguchi H."/>
            <person name="Totoki Y."/>
            <person name="Toyoda A."/>
            <person name="Kuroki Y."/>
            <person name="Dewar K."/>
            <person name="Lloyd C."/>
            <person name="Itoh T."/>
            <person name="Takeda T."/>
            <person name="Kim D.-W."/>
            <person name="She X."/>
            <person name="Barlow K.F."/>
            <person name="Bloom T."/>
            <person name="Bruford E."/>
            <person name="Chang J.L."/>
            <person name="Cuomo C.A."/>
            <person name="Eichler E."/>
            <person name="FitzGerald M.G."/>
            <person name="Jaffe D.B."/>
            <person name="LaButti K."/>
            <person name="Nicol R."/>
            <person name="Park H.-S."/>
            <person name="Seaman C."/>
            <person name="Sougnez C."/>
            <person name="Yang X."/>
            <person name="Zimmer A.R."/>
            <person name="Zody M.C."/>
            <person name="Birren B.W."/>
            <person name="Nusbaum C."/>
            <person name="Fujiyama A."/>
            <person name="Hattori M."/>
            <person name="Rogers J."/>
            <person name="Lander E.S."/>
            <person name="Sakaki Y."/>
        </authorList>
    </citation>
    <scope>NUCLEOTIDE SEQUENCE [LARGE SCALE GENOMIC DNA]</scope>
</reference>
<reference key="5">
    <citation type="journal article" date="2004" name="Genome Res.">
        <title>The status, quality, and expansion of the NIH full-length cDNA project: the Mammalian Gene Collection (MGC).</title>
        <authorList>
            <consortium name="The MGC Project Team"/>
        </authorList>
    </citation>
    <scope>NUCLEOTIDE SEQUENCE [LARGE SCALE MRNA] (ISOFORM 2)</scope>
    <source>
        <tissue>Chondrosarcoma</tissue>
    </source>
</reference>
<reference key="6">
    <citation type="journal article" date="2004" name="Proc. Natl. Acad. Sci. U.S.A.">
        <title>Large-scale cDNA transfection screening for genes related to cancer development and progression.</title>
        <authorList>
            <person name="Wan D."/>
            <person name="Gong Y."/>
            <person name="Qin W."/>
            <person name="Zhang P."/>
            <person name="Li J."/>
            <person name="Wei L."/>
            <person name="Zhou X."/>
            <person name="Li H."/>
            <person name="Qiu X."/>
            <person name="Zhong F."/>
            <person name="He L."/>
            <person name="Yu J."/>
            <person name="Yao G."/>
            <person name="Jiang H."/>
            <person name="Qian L."/>
            <person name="Yu Y."/>
            <person name="Shu H."/>
            <person name="Chen X."/>
            <person name="Xu H."/>
            <person name="Guo M."/>
            <person name="Pan Z."/>
            <person name="Chen Y."/>
            <person name="Ge C."/>
            <person name="Yang S."/>
            <person name="Gu J."/>
        </authorList>
    </citation>
    <scope>NUCLEOTIDE SEQUENCE [LARGE SCALE MRNA] OF 24-720 (ISOFORM 1)</scope>
</reference>
<reference key="7">
    <citation type="journal article" date="2004" name="Am. J. Pathol.">
        <title>Cloning of cDNA encoding a regeneration-associated muscle protease whose expression is attenuated in cell lines derived from Duchenne muscular dystrophy patients.</title>
        <authorList>
            <person name="Nakayama Y."/>
            <person name="Nara N."/>
            <person name="Kawakita Y."/>
            <person name="Takeshima Y."/>
            <person name="Arakawa M."/>
            <person name="Katoh M."/>
            <person name="Morita S."/>
            <person name="Iwatsuki K."/>
            <person name="Tanaka K."/>
            <person name="Okamoto S."/>
            <person name="Kitamura T."/>
            <person name="Seki N."/>
            <person name="Matsuda R."/>
            <person name="Matsuo M."/>
            <person name="Saito K."/>
            <person name="Hara T."/>
        </authorList>
    </citation>
    <scope>INDUCTION</scope>
</reference>
<reference key="8">
    <citation type="journal article" date="2005" name="J. Proteome Res.">
        <title>Human plasma N-glycoproteome analysis by immunoaffinity subtraction, hydrazide chemistry, and mass spectrometry.</title>
        <authorList>
            <person name="Liu T."/>
            <person name="Qian W.-J."/>
            <person name="Gritsenko M.A."/>
            <person name="Camp D.G. II"/>
            <person name="Monroe M.E."/>
            <person name="Moore R.J."/>
            <person name="Smith R.D."/>
        </authorList>
    </citation>
    <scope>GLYCOSYLATION [LARGE SCALE ANALYSIS] AT ASN-614</scope>
    <source>
        <tissue>Plasma</tissue>
    </source>
</reference>
<evidence type="ECO:0000250" key="1"/>
<evidence type="ECO:0000255" key="2"/>
<evidence type="ECO:0000255" key="3">
    <source>
        <dbReference type="PROSITE-ProRule" id="PRU00059"/>
    </source>
</evidence>
<evidence type="ECO:0000255" key="4">
    <source>
        <dbReference type="PROSITE-ProRule" id="PRU00076"/>
    </source>
</evidence>
<evidence type="ECO:0000255" key="5">
    <source>
        <dbReference type="PROSITE-ProRule" id="PRU00274"/>
    </source>
</evidence>
<evidence type="ECO:0000255" key="6">
    <source>
        <dbReference type="PROSITE-ProRule" id="PRU00302"/>
    </source>
</evidence>
<evidence type="ECO:0000269" key="7">
    <source>
    </source>
</evidence>
<evidence type="ECO:0000269" key="8">
    <source>
    </source>
</evidence>
<evidence type="ECO:0000303" key="9">
    <source>
    </source>
</evidence>
<evidence type="ECO:0000303" key="10">
    <source>
    </source>
</evidence>
<evidence type="ECO:0000305" key="11"/>
<protein>
    <recommendedName>
        <fullName>Inactive serine protease PAMR1</fullName>
    </recommendedName>
    <alternativeName>
        <fullName>Peptidase domain-containing protein associated with muscle regeneration 1</fullName>
    </alternativeName>
    <alternativeName>
        <fullName>Regeneration-associated muscle protease homolog</fullName>
    </alternativeName>
</protein>
<sequence length="720" mass="80199">MELGCWTQLGLTFLQLLLISSLPREYTVINEACPGAEWNIMCRECCEYDQIECVCPGKREVVGYTIPCCRNEENECDSCLIHPGCTIFENCKSCRNGSWGGTLDDFYVKGFYCAECRAGWYGGDCMRCGQVLRAPKGQILLESYPLNAHCEWTIHAKPGFVIQLRFVMLSLEFDYMCQYDYVEVRDGDNRDGQIIKRVCGNERPAPIQSIGSSLHVLFHSDGSKNFDGFHAIYEEITACSSSPCFHDGTCVLDKAGSYKCACLAGYTGQRCENLLEERNCSDPGGPVNGYQKITGGPGLINGRHAKIGTVVSFFCNNSYVLSGNEKRTCQQNGEWSGKQPICIKACREPKISDLVRRRVLPMQVQSRETPLHQLYSAAFSKQKLQSAPTKKPALPFGDLPMGYQHLHTQLQYECISPFYRRLGSSRRTCLRTGKWSGRAPSCIPICGKIENITAPKTQGLRWPWQAAIYRRTSGVHDGSLHKGAWFLVCSGALVNERTVVVAAHCVTDLGKVTMIKTADLKVVLGKFYRDDDRDEKTIQSLQISAIILHPNYDPILLDADIAILKLLDKARISTRVQPICLAASRDLSTSFQESHITVAGWNVLADVRSPGFKNDTLRSGVVSVVDSLLCEEQHEDHGIPVSVTDNMFCASWEPTAPSDICTAETGGIAAVSFPGRASPEPRWHLMGLVSWSYDKTCSHRLSTAFTKVLPFKDWIERNMK</sequence>
<comment type="function">
    <text evidence="1">May play a role in regeneration of skeletal muscle.</text>
</comment>
<comment type="subcellular location">
    <subcellularLocation>
        <location evidence="11">Secreted</location>
    </subcellularLocation>
</comment>
<comment type="alternative products">
    <event type="alternative splicing"/>
    <isoform>
        <id>Q6UXH9-1</id>
        <name>1</name>
        <sequence type="displayed"/>
    </isoform>
    <isoform>
        <id>Q6UXH9-2</id>
        <name>2</name>
        <sequence type="described" ref="VSP_025568"/>
    </isoform>
    <isoform>
        <id>Q6UXH9-3</id>
        <name>3</name>
        <sequence type="described" ref="VSP_055371"/>
    </isoform>
</comment>
<comment type="induction">
    <text evidence="7">Strongly down-regulated in muscle cell lines derived from biopsies of 5 Duchenne muscular dystrophy (DMD) patients compared to a normal muscle cell line.</text>
</comment>
<comment type="similarity">
    <text evidence="5">Belongs to the peptidase S1 family.</text>
</comment>
<comment type="caution">
    <text evidence="11">Although related to peptidase S1 family, lacks the conserved active Ser residue in position 665 which is replaced by a Thr, suggesting that it has no protease activity.</text>
</comment>
<comment type="sequence caution" evidence="11">
    <conflict type="frameshift">
        <sequence resource="EMBL-CDS" id="AAQ15224"/>
    </conflict>
</comment>
<dbReference type="EMBL" id="AY358346">
    <property type="protein sequence ID" value="AAQ88712.1"/>
    <property type="molecule type" value="mRNA"/>
</dbReference>
<dbReference type="EMBL" id="AK027841">
    <property type="protein sequence ID" value="BAB55404.1"/>
    <property type="molecule type" value="mRNA"/>
</dbReference>
<dbReference type="EMBL" id="AK316188">
    <property type="protein sequence ID" value="BAH14559.1"/>
    <property type="molecule type" value="mRNA"/>
</dbReference>
<dbReference type="EMBL" id="AL050214">
    <property type="protein sequence ID" value="CAB43317.1"/>
    <property type="molecule type" value="mRNA"/>
</dbReference>
<dbReference type="EMBL" id="AL832391">
    <property type="protein sequence ID" value="CAI46203.1"/>
    <property type="molecule type" value="mRNA"/>
</dbReference>
<dbReference type="EMBL" id="BX640676">
    <property type="protein sequence ID" value="CAE45808.1"/>
    <property type="molecule type" value="mRNA"/>
</dbReference>
<dbReference type="EMBL" id="AC090625">
    <property type="status" value="NOT_ANNOTATED_CDS"/>
    <property type="molecule type" value="Genomic_DNA"/>
</dbReference>
<dbReference type="EMBL" id="AL354921">
    <property type="status" value="NOT_ANNOTATED_CDS"/>
    <property type="molecule type" value="Genomic_DNA"/>
</dbReference>
<dbReference type="EMBL" id="BC089434">
    <property type="protein sequence ID" value="AAH89434.1"/>
    <property type="molecule type" value="mRNA"/>
</dbReference>
<dbReference type="EMBL" id="AF370388">
    <property type="protein sequence ID" value="AAQ15224.1"/>
    <property type="status" value="ALT_FRAME"/>
    <property type="molecule type" value="mRNA"/>
</dbReference>
<dbReference type="CCDS" id="CCDS31460.1">
    <molecule id="Q6UXH9-1"/>
</dbReference>
<dbReference type="CCDS" id="CCDS60760.1">
    <molecule id="Q6UXH9-3"/>
</dbReference>
<dbReference type="CCDS" id="CCDS7898.1">
    <molecule id="Q6UXH9-2"/>
</dbReference>
<dbReference type="PIR" id="T08805">
    <property type="entry name" value="T08805"/>
</dbReference>
<dbReference type="RefSeq" id="NP_001001991.1">
    <molecule id="Q6UXH9-1"/>
    <property type="nucleotide sequence ID" value="NM_001001991.3"/>
</dbReference>
<dbReference type="RefSeq" id="NP_001269604.1">
    <property type="nucleotide sequence ID" value="NM_001282675.1"/>
</dbReference>
<dbReference type="RefSeq" id="NP_001269605.1">
    <molecule id="Q6UXH9-3"/>
    <property type="nucleotide sequence ID" value="NM_001282676.2"/>
</dbReference>
<dbReference type="RefSeq" id="NP_056245.2">
    <molecule id="Q6UXH9-2"/>
    <property type="nucleotide sequence ID" value="NM_015430.4"/>
</dbReference>
<dbReference type="SMR" id="Q6UXH9"/>
<dbReference type="BioGRID" id="117400">
    <property type="interactions" value="3"/>
</dbReference>
<dbReference type="FunCoup" id="Q6UXH9">
    <property type="interactions" value="42"/>
</dbReference>
<dbReference type="IntAct" id="Q6UXH9">
    <property type="interactions" value="3"/>
</dbReference>
<dbReference type="STRING" id="9606.ENSP00000482899"/>
<dbReference type="MEROPS" id="S01.998"/>
<dbReference type="GlyCosmos" id="Q6UXH9">
    <property type="glycosylation" value="2 sites, 1 glycan"/>
</dbReference>
<dbReference type="GlyGen" id="Q6UXH9">
    <property type="glycosylation" value="9 sites, 12 N-linked glycans (5 sites), 1 O-linked glycan (4 sites)"/>
</dbReference>
<dbReference type="iPTMnet" id="Q6UXH9"/>
<dbReference type="PhosphoSitePlus" id="Q6UXH9"/>
<dbReference type="BioMuta" id="PAMR1"/>
<dbReference type="DMDM" id="74738221"/>
<dbReference type="jPOST" id="Q6UXH9"/>
<dbReference type="MassIVE" id="Q6UXH9"/>
<dbReference type="PaxDb" id="9606-ENSP00000482899"/>
<dbReference type="PeptideAtlas" id="Q6UXH9"/>
<dbReference type="ProteomicsDB" id="1941"/>
<dbReference type="ProteomicsDB" id="67625">
    <molecule id="Q6UXH9-1"/>
</dbReference>
<dbReference type="ProteomicsDB" id="67626">
    <molecule id="Q6UXH9-2"/>
</dbReference>
<dbReference type="Antibodypedia" id="25958">
    <property type="antibodies" value="34 antibodies from 14 providers"/>
</dbReference>
<dbReference type="DNASU" id="25891"/>
<dbReference type="Ensembl" id="ENST00000615849.4">
    <molecule id="Q6UXH9-3"/>
    <property type="protein sequence ID" value="ENSP00000479260.1"/>
    <property type="gene ID" value="ENSG00000149090.13"/>
</dbReference>
<dbReference type="Ensembl" id="ENST00000619888.5">
    <molecule id="Q6UXH9-1"/>
    <property type="protein sequence ID" value="ENSP00000483703.1"/>
    <property type="gene ID" value="ENSG00000149090.13"/>
</dbReference>
<dbReference type="Ensembl" id="ENST00000622144.4">
    <molecule id="Q6UXH9-2"/>
    <property type="protein sequence ID" value="ENSP00000482899.1"/>
    <property type="gene ID" value="ENSG00000149090.13"/>
</dbReference>
<dbReference type="GeneID" id="25891"/>
<dbReference type="KEGG" id="hsa:25891"/>
<dbReference type="MANE-Select" id="ENST00000619888.5">
    <property type="protein sequence ID" value="ENSP00000483703.1"/>
    <property type="RefSeq nucleotide sequence ID" value="NM_001001991.3"/>
    <property type="RefSeq protein sequence ID" value="NP_001001991.1"/>
</dbReference>
<dbReference type="UCSC" id="uc031xjw.2">
    <molecule id="Q6UXH9-1"/>
    <property type="organism name" value="human"/>
</dbReference>
<dbReference type="AGR" id="HGNC:24554"/>
<dbReference type="CTD" id="25891"/>
<dbReference type="DisGeNET" id="25891"/>
<dbReference type="GeneCards" id="PAMR1"/>
<dbReference type="HGNC" id="HGNC:24554">
    <property type="gene designation" value="PAMR1"/>
</dbReference>
<dbReference type="HPA" id="ENSG00000149090">
    <property type="expression patterns" value="Low tissue specificity"/>
</dbReference>
<dbReference type="neXtProt" id="NX_Q6UXH9"/>
<dbReference type="OpenTargets" id="ENSG00000149090"/>
<dbReference type="PharmGKB" id="PA164724339"/>
<dbReference type="VEuPathDB" id="HostDB:ENSG00000149090"/>
<dbReference type="eggNOG" id="KOG3627">
    <property type="taxonomic scope" value="Eukaryota"/>
</dbReference>
<dbReference type="GeneTree" id="ENSGT00940000154234"/>
<dbReference type="InParanoid" id="Q6UXH9"/>
<dbReference type="OMA" id="YCAECRG"/>
<dbReference type="OrthoDB" id="6147874at2759"/>
<dbReference type="PAN-GO" id="Q6UXH9">
    <property type="GO annotations" value="0 GO annotations based on evolutionary models"/>
</dbReference>
<dbReference type="PhylomeDB" id="Q6UXH9"/>
<dbReference type="TreeFam" id="TF351669"/>
<dbReference type="PathwayCommons" id="Q6UXH9"/>
<dbReference type="SignaLink" id="Q6UXH9"/>
<dbReference type="BioGRID-ORCS" id="25891">
    <property type="hits" value="8 hits in 1145 CRISPR screens"/>
</dbReference>
<dbReference type="ChiTaRS" id="PAMR1">
    <property type="organism name" value="human"/>
</dbReference>
<dbReference type="GenomeRNAi" id="25891"/>
<dbReference type="Pharos" id="Q6UXH9">
    <property type="development level" value="Tdark"/>
</dbReference>
<dbReference type="PRO" id="PR:Q6UXH9"/>
<dbReference type="Proteomes" id="UP000005640">
    <property type="component" value="Chromosome 11"/>
</dbReference>
<dbReference type="RNAct" id="Q6UXH9">
    <property type="molecule type" value="protein"/>
</dbReference>
<dbReference type="Bgee" id="ENSG00000149090">
    <property type="expression patterns" value="Expressed in decidua and 172 other cell types or tissues"/>
</dbReference>
<dbReference type="ExpressionAtlas" id="Q6UXH9">
    <property type="expression patterns" value="baseline and differential"/>
</dbReference>
<dbReference type="GO" id="GO:0005576">
    <property type="term" value="C:extracellular region"/>
    <property type="evidence" value="ECO:0007669"/>
    <property type="project" value="UniProtKB-SubCell"/>
</dbReference>
<dbReference type="GO" id="GO:0005509">
    <property type="term" value="F:calcium ion binding"/>
    <property type="evidence" value="ECO:0007669"/>
    <property type="project" value="InterPro"/>
</dbReference>
<dbReference type="CDD" id="cd00033">
    <property type="entry name" value="CCP"/>
    <property type="match status" value="2"/>
</dbReference>
<dbReference type="CDD" id="cd00041">
    <property type="entry name" value="CUB"/>
    <property type="match status" value="1"/>
</dbReference>
<dbReference type="CDD" id="cd00054">
    <property type="entry name" value="EGF_CA"/>
    <property type="match status" value="1"/>
</dbReference>
<dbReference type="CDD" id="cd00190">
    <property type="entry name" value="Tryp_SPc"/>
    <property type="match status" value="1"/>
</dbReference>
<dbReference type="FunFam" id="2.10.70.10:FF:000029">
    <property type="entry name" value="Inactive serine protease PAMR1 isoform X1"/>
    <property type="match status" value="1"/>
</dbReference>
<dbReference type="FunFam" id="2.10.25.10:FF:000970">
    <property type="entry name" value="Peptidase domain-containing-associated with muscle regeneration 1"/>
    <property type="match status" value="1"/>
</dbReference>
<dbReference type="FunFam" id="2.60.120.290:FF:000005">
    <property type="entry name" value="Procollagen C-endopeptidase enhancer 1"/>
    <property type="match status" value="1"/>
</dbReference>
<dbReference type="FunFam" id="2.40.10.10:FF:000068">
    <property type="entry name" value="transmembrane protease serine 2"/>
    <property type="match status" value="1"/>
</dbReference>
<dbReference type="Gene3D" id="2.10.70.10">
    <property type="entry name" value="Complement Module, domain 1"/>
    <property type="match status" value="2"/>
</dbReference>
<dbReference type="Gene3D" id="2.10.25.10">
    <property type="entry name" value="Laminin"/>
    <property type="match status" value="1"/>
</dbReference>
<dbReference type="Gene3D" id="2.60.120.290">
    <property type="entry name" value="Spermadhesin, CUB domain"/>
    <property type="match status" value="1"/>
</dbReference>
<dbReference type="Gene3D" id="2.40.10.10">
    <property type="entry name" value="Trypsin-like serine proteases"/>
    <property type="match status" value="1"/>
</dbReference>
<dbReference type="InterPro" id="IPR000859">
    <property type="entry name" value="CUB_dom"/>
</dbReference>
<dbReference type="InterPro" id="IPR001881">
    <property type="entry name" value="EGF-like_Ca-bd_dom"/>
</dbReference>
<dbReference type="InterPro" id="IPR000742">
    <property type="entry name" value="EGF-like_dom"/>
</dbReference>
<dbReference type="InterPro" id="IPR009003">
    <property type="entry name" value="Peptidase_S1_PA"/>
</dbReference>
<dbReference type="InterPro" id="IPR043504">
    <property type="entry name" value="Peptidase_S1_PA_chymotrypsin"/>
</dbReference>
<dbReference type="InterPro" id="IPR001314">
    <property type="entry name" value="Peptidase_S1A"/>
</dbReference>
<dbReference type="InterPro" id="IPR051659">
    <property type="entry name" value="Serine_Protease_S1-Domain"/>
</dbReference>
<dbReference type="InterPro" id="IPR035914">
    <property type="entry name" value="Sperma_CUB_dom_sf"/>
</dbReference>
<dbReference type="InterPro" id="IPR035976">
    <property type="entry name" value="Sushi/SCR/CCP_sf"/>
</dbReference>
<dbReference type="InterPro" id="IPR000436">
    <property type="entry name" value="Sushi_SCR_CCP_dom"/>
</dbReference>
<dbReference type="InterPro" id="IPR001254">
    <property type="entry name" value="Trypsin_dom"/>
</dbReference>
<dbReference type="PANTHER" id="PTHR24254:SF9">
    <property type="entry name" value="INACTIVE SERINE PROTEASE PAMR1"/>
    <property type="match status" value="1"/>
</dbReference>
<dbReference type="PANTHER" id="PTHR24254">
    <property type="entry name" value="PROTHROMBIN"/>
    <property type="match status" value="1"/>
</dbReference>
<dbReference type="Pfam" id="PF00431">
    <property type="entry name" value="CUB"/>
    <property type="match status" value="1"/>
</dbReference>
<dbReference type="Pfam" id="PF00008">
    <property type="entry name" value="EGF"/>
    <property type="match status" value="1"/>
</dbReference>
<dbReference type="Pfam" id="PF00084">
    <property type="entry name" value="Sushi"/>
    <property type="match status" value="2"/>
</dbReference>
<dbReference type="Pfam" id="PF00089">
    <property type="entry name" value="Trypsin"/>
    <property type="match status" value="1"/>
</dbReference>
<dbReference type="PRINTS" id="PR00722">
    <property type="entry name" value="CHYMOTRYPSIN"/>
</dbReference>
<dbReference type="SMART" id="SM00032">
    <property type="entry name" value="CCP"/>
    <property type="match status" value="2"/>
</dbReference>
<dbReference type="SMART" id="SM00042">
    <property type="entry name" value="CUB"/>
    <property type="match status" value="1"/>
</dbReference>
<dbReference type="SMART" id="SM00181">
    <property type="entry name" value="EGF"/>
    <property type="match status" value="2"/>
</dbReference>
<dbReference type="SMART" id="SM00179">
    <property type="entry name" value="EGF_CA"/>
    <property type="match status" value="1"/>
</dbReference>
<dbReference type="SMART" id="SM00020">
    <property type="entry name" value="Tryp_SPc"/>
    <property type="match status" value="1"/>
</dbReference>
<dbReference type="SUPFAM" id="SSF57535">
    <property type="entry name" value="Complement control module/SCR domain"/>
    <property type="match status" value="1"/>
</dbReference>
<dbReference type="SUPFAM" id="SSF57196">
    <property type="entry name" value="EGF/Laminin"/>
    <property type="match status" value="1"/>
</dbReference>
<dbReference type="SUPFAM" id="SSF49854">
    <property type="entry name" value="Spermadhesin, CUB domain"/>
    <property type="match status" value="1"/>
</dbReference>
<dbReference type="SUPFAM" id="SSF50494">
    <property type="entry name" value="Trypsin-like serine proteases"/>
    <property type="match status" value="1"/>
</dbReference>
<dbReference type="PROSITE" id="PS01180">
    <property type="entry name" value="CUB"/>
    <property type="match status" value="1"/>
</dbReference>
<dbReference type="PROSITE" id="PS00022">
    <property type="entry name" value="EGF_1"/>
    <property type="match status" value="1"/>
</dbReference>
<dbReference type="PROSITE" id="PS01186">
    <property type="entry name" value="EGF_2"/>
    <property type="match status" value="1"/>
</dbReference>
<dbReference type="PROSITE" id="PS50026">
    <property type="entry name" value="EGF_3"/>
    <property type="match status" value="1"/>
</dbReference>
<dbReference type="PROSITE" id="PS50923">
    <property type="entry name" value="SUSHI"/>
    <property type="match status" value="2"/>
</dbReference>
<dbReference type="PROSITE" id="PS50240">
    <property type="entry name" value="TRYPSIN_DOM"/>
    <property type="match status" value="1"/>
</dbReference>
<feature type="signal peptide" evidence="2">
    <location>
        <begin position="1"/>
        <end position="21"/>
    </location>
</feature>
<feature type="chain" id="PRO_0000287602" description="Inactive serine protease PAMR1">
    <location>
        <begin position="22"/>
        <end position="720"/>
    </location>
</feature>
<feature type="domain" description="CUB" evidence="3">
    <location>
        <begin position="128"/>
        <end position="236"/>
    </location>
</feature>
<feature type="domain" description="EGF-like" evidence="4">
    <location>
        <begin position="235"/>
        <end position="272"/>
    </location>
</feature>
<feature type="domain" description="Sushi 1" evidence="6">
    <location>
        <begin position="278"/>
        <end position="344"/>
    </location>
</feature>
<feature type="domain" description="Sushi 2" evidence="6">
    <location>
        <begin position="387"/>
        <end position="444"/>
    </location>
</feature>
<feature type="domain" description="Peptidase S1" evidence="5">
    <location>
        <begin position="445"/>
        <end position="720"/>
    </location>
</feature>
<feature type="glycosylation site" description="N-linked (GlcNAc...) asparagine" evidence="8">
    <location>
        <position position="614"/>
    </location>
</feature>
<feature type="disulfide bond" evidence="1">
    <location>
        <begin position="128"/>
        <end position="150"/>
    </location>
</feature>
<feature type="disulfide bond" evidence="1">
    <location>
        <begin position="177"/>
        <end position="199"/>
    </location>
</feature>
<feature type="disulfide bond" evidence="1">
    <location>
        <begin position="239"/>
        <end position="250"/>
    </location>
</feature>
<feature type="disulfide bond" evidence="1">
    <location>
        <begin position="244"/>
        <end position="260"/>
    </location>
</feature>
<feature type="disulfide bond" evidence="1">
    <location>
        <begin position="262"/>
        <end position="271"/>
    </location>
</feature>
<feature type="disulfide bond" evidence="1">
    <location>
        <begin position="280"/>
        <end position="329"/>
    </location>
</feature>
<feature type="disulfide bond" evidence="1">
    <location>
        <begin position="315"/>
        <end position="342"/>
    </location>
</feature>
<feature type="disulfide bond" evidence="1">
    <location>
        <begin position="414"/>
        <end position="442"/>
    </location>
</feature>
<feature type="disulfide bond" evidence="1">
    <location>
        <begin position="489"/>
        <end position="505"/>
    </location>
</feature>
<feature type="disulfide bond" evidence="1">
    <location>
        <begin position="630"/>
        <end position="649"/>
    </location>
</feature>
<feature type="disulfide bond" evidence="1">
    <location>
        <begin position="661"/>
        <end position="697"/>
    </location>
</feature>
<feature type="splice variant" id="VSP_055371" description="In isoform 3." evidence="9">
    <original>RCGQVLRAPKGQILLESYPLNAHCEWTIHAKPGFVIQLRFVMLSLEFDYMCQYDYVEVRDGDNRDGQIIKRVCGNERPAPIQSIGSSLHVLFHSDGSKNFDGFHAIYEEITA</original>
    <variation>P</variation>
    <location>
        <begin position="127"/>
        <end position="238"/>
    </location>
</feature>
<feature type="splice variant" id="VSP_025568" description="In isoform 2." evidence="9 10">
    <original>L</original>
    <variation>LLEAGKSKIKASEDSLSV</variation>
    <location>
        <position position="274"/>
    </location>
</feature>
<feature type="sequence variant" id="VAR_032335" description="In dbSNP:rs16927482.">
    <original>A</original>
    <variation>T</variation>
    <location>
        <position position="305"/>
    </location>
</feature>
<feature type="sequence conflict" description="In Ref. 2; BAB55404." evidence="11" ref="2">
    <original>S</original>
    <variation>P</variation>
    <location>
        <position position="257"/>
    </location>
</feature>
<feature type="sequence conflict" description="In Ref. 2; BAH14559." evidence="11" ref="2">
    <original>F</original>
    <variation>S</variation>
    <location>
        <position position="396"/>
    </location>
</feature>
<feature type="sequence conflict" description="In Ref. 3; CAB43317/CAI46203/CAE45808." evidence="11" ref="3">
    <original>Q</original>
    <variation>R</variation>
    <location>
        <position position="542"/>
    </location>
</feature>
<feature type="sequence conflict" description="In Ref. 3; CAE45808." evidence="11" ref="3">
    <original>T</original>
    <variation>A</variation>
    <location>
        <position position="665"/>
    </location>
</feature>
<gene>
    <name type="primary">PAMR1</name>
    <name type="synonym">RAMP</name>
    <name type="ORF">FP938</name>
    <name type="ORF">UNQ699/PRO1344</name>
</gene>